<proteinExistence type="evidence at protein level"/>
<feature type="chain" id="PRO_0000159098" description="Ferredoxin-2">
    <location>
        <begin position="1"/>
        <end position="106"/>
    </location>
</feature>
<feature type="domain" description="4Fe-4S ferredoxin-type 1" evidence="2">
    <location>
        <begin position="2"/>
        <end position="29"/>
    </location>
</feature>
<feature type="domain" description="4Fe-4S ferredoxin-type 2" evidence="2">
    <location>
        <begin position="30"/>
        <end position="59"/>
    </location>
</feature>
<feature type="region of interest" description="Disordered" evidence="3">
    <location>
        <begin position="80"/>
        <end position="106"/>
    </location>
</feature>
<feature type="binding site" evidence="1">
    <location>
        <position position="8"/>
    </location>
    <ligand>
        <name>[3Fe-4S] cluster</name>
        <dbReference type="ChEBI" id="CHEBI:21137"/>
    </ligand>
</feature>
<feature type="binding site" evidence="1">
    <location>
        <position position="16"/>
    </location>
    <ligand>
        <name>[3Fe-4S] cluster</name>
        <dbReference type="ChEBI" id="CHEBI:21137"/>
    </ligand>
</feature>
<feature type="binding site" evidence="1">
    <location>
        <position position="20"/>
    </location>
    <ligand>
        <name>[4Fe-4S] cluster</name>
        <dbReference type="ChEBI" id="CHEBI:49883"/>
    </ligand>
</feature>
<feature type="binding site" evidence="1">
    <location>
        <position position="39"/>
    </location>
    <ligand>
        <name>[4Fe-4S] cluster</name>
        <dbReference type="ChEBI" id="CHEBI:49883"/>
    </ligand>
</feature>
<feature type="binding site" evidence="1">
    <location>
        <position position="42"/>
    </location>
    <ligand>
        <name>[4Fe-4S] cluster</name>
        <dbReference type="ChEBI" id="CHEBI:49883"/>
    </ligand>
</feature>
<feature type="binding site" evidence="1">
    <location>
        <position position="45"/>
    </location>
    <ligand>
        <name>[4Fe-4S] cluster</name>
        <dbReference type="ChEBI" id="CHEBI:49883"/>
    </ligand>
</feature>
<feature type="binding site" evidence="1">
    <location>
        <position position="49"/>
    </location>
    <ligand>
        <name>[3Fe-4S] cluster</name>
        <dbReference type="ChEBI" id="CHEBI:21137"/>
    </ligand>
</feature>
<reference key="1">
    <citation type="journal article" date="1995" name="Photosyn. Res.">
        <title>Amino acid sequence of ferredoxin II from the phototroph Rhodospirillum rubrum. Characteristics of a 7Fe ferredoxin.</title>
        <authorList>
            <person name="Ishikawa Y."/>
            <person name="Yoch D.C."/>
        </authorList>
    </citation>
    <scope>PROTEIN SEQUENCE</scope>
    <source>
        <strain>S1-G</strain>
    </source>
</reference>
<accession>P80448</accession>
<evidence type="ECO:0000250" key="1"/>
<evidence type="ECO:0000255" key="2">
    <source>
        <dbReference type="PROSITE-ProRule" id="PRU00711"/>
    </source>
</evidence>
<evidence type="ECO:0000256" key="3">
    <source>
        <dbReference type="SAM" id="MobiDB-lite"/>
    </source>
</evidence>
<dbReference type="PIR" id="S69937">
    <property type="entry name" value="S69937"/>
</dbReference>
<dbReference type="SMR" id="P80448"/>
<dbReference type="GO" id="GO:0051538">
    <property type="term" value="F:3 iron, 4 sulfur cluster binding"/>
    <property type="evidence" value="ECO:0007669"/>
    <property type="project" value="UniProtKB-KW"/>
</dbReference>
<dbReference type="GO" id="GO:0051539">
    <property type="term" value="F:4 iron, 4 sulfur cluster binding"/>
    <property type="evidence" value="ECO:0007669"/>
    <property type="project" value="UniProtKB-KW"/>
</dbReference>
<dbReference type="GO" id="GO:0009055">
    <property type="term" value="F:electron transfer activity"/>
    <property type="evidence" value="ECO:0007669"/>
    <property type="project" value="InterPro"/>
</dbReference>
<dbReference type="GO" id="GO:0046872">
    <property type="term" value="F:metal ion binding"/>
    <property type="evidence" value="ECO:0007669"/>
    <property type="project" value="UniProtKB-KW"/>
</dbReference>
<dbReference type="Gene3D" id="3.30.70.20">
    <property type="match status" value="1"/>
</dbReference>
<dbReference type="InterPro" id="IPR017896">
    <property type="entry name" value="4Fe4S_Fe-S-bd"/>
</dbReference>
<dbReference type="InterPro" id="IPR017900">
    <property type="entry name" value="4Fe4S_Fe_S_CS"/>
</dbReference>
<dbReference type="InterPro" id="IPR000813">
    <property type="entry name" value="7Fe_ferredoxin"/>
</dbReference>
<dbReference type="InterPro" id="IPR022569">
    <property type="entry name" value="Fd_C"/>
</dbReference>
<dbReference type="InterPro" id="IPR050294">
    <property type="entry name" value="RnfB_subfamily"/>
</dbReference>
<dbReference type="PANTHER" id="PTHR42859:SF2">
    <property type="entry name" value="FERREDOXIN"/>
    <property type="match status" value="1"/>
</dbReference>
<dbReference type="PANTHER" id="PTHR42859">
    <property type="entry name" value="OXIDOREDUCTASE"/>
    <property type="match status" value="1"/>
</dbReference>
<dbReference type="Pfam" id="PF11953">
    <property type="entry name" value="DUF3470"/>
    <property type="match status" value="1"/>
</dbReference>
<dbReference type="Pfam" id="PF00037">
    <property type="entry name" value="Fer4"/>
    <property type="match status" value="1"/>
</dbReference>
<dbReference type="PRINTS" id="PR00354">
    <property type="entry name" value="7FE8SFRDOXIN"/>
</dbReference>
<dbReference type="SUPFAM" id="SSF54862">
    <property type="entry name" value="4Fe-4S ferredoxins"/>
    <property type="match status" value="1"/>
</dbReference>
<dbReference type="PROSITE" id="PS00198">
    <property type="entry name" value="4FE4S_FER_1"/>
    <property type="match status" value="1"/>
</dbReference>
<dbReference type="PROSITE" id="PS51379">
    <property type="entry name" value="4FE4S_FER_2"/>
    <property type="match status" value="2"/>
</dbReference>
<name>FER2_RHORU</name>
<organism>
    <name type="scientific">Rhodospirillum rubrum</name>
    <dbReference type="NCBI Taxonomy" id="1085"/>
    <lineage>
        <taxon>Bacteria</taxon>
        <taxon>Pseudomonadati</taxon>
        <taxon>Pseudomonadota</taxon>
        <taxon>Alphaproteobacteria</taxon>
        <taxon>Rhodospirillales</taxon>
        <taxon>Rhodospirillaceae</taxon>
        <taxon>Rhodospirillum</taxon>
    </lineage>
</organism>
<protein>
    <recommendedName>
        <fullName>Ferredoxin-2</fullName>
    </recommendedName>
    <alternativeName>
        <fullName>Ferredoxin II</fullName>
        <shortName>FdII</shortName>
    </alternativeName>
</protein>
<keyword id="KW-0003">3Fe-4S</keyword>
<keyword id="KW-0004">4Fe-4S</keyword>
<keyword id="KW-0903">Direct protein sequencing</keyword>
<keyword id="KW-0249">Electron transport</keyword>
<keyword id="KW-0408">Iron</keyword>
<keyword id="KW-0411">Iron-sulfur</keyword>
<keyword id="KW-0479">Metal-binding</keyword>
<keyword id="KW-0677">Repeat</keyword>
<keyword id="KW-0813">Transport</keyword>
<comment type="function">
    <text>Ferredoxins are iron-sulfur proteins that transfer electrons in a wide variety of metabolic reactions.</text>
</comment>
<comment type="cofactor">
    <cofactor>
        <name>[4Fe-4S] cluster</name>
        <dbReference type="ChEBI" id="CHEBI:49883"/>
    </cofactor>
    <text>Binds 1 [4Fe-4S] cluster.</text>
</comment>
<comment type="cofactor">
    <cofactor>
        <name>[3Fe-4S] cluster</name>
        <dbReference type="ChEBI" id="CHEBI:21137"/>
    </cofactor>
    <text>Binds 1 [3Fe-4S] cluster.</text>
</comment>
<sequence>PYVVTENCIKCKYQDCVEVCPVDCFYEGENFLVINPDECIDCGVCNPECPAEAIAGKWLEINRKFADLWPNITRKGPALADADDWKDKPDKTGLLSENPGKGTVCH</sequence>